<proteinExistence type="evidence at protein level"/>
<keyword id="KW-0002">3D-structure</keyword>
<keyword id="KW-0238">DNA-binding</keyword>
<keyword id="KW-0539">Nucleus</keyword>
<keyword id="KW-0597">Phosphoprotein</keyword>
<keyword id="KW-1267">Proteomics identification</keyword>
<keyword id="KW-1185">Reference proteome</keyword>
<keyword id="KW-0804">Transcription</keyword>
<keyword id="KW-0805">Transcription regulation</keyword>
<comment type="function">
    <text evidence="4 7 12">Increases DNTT terminal deoxynucleotidyltransferase activity (in vitro) (PubMed:11473582). Also acts as a transcriptional regulator, binding to the consensus sequence 5'-GNTGCATG-3' following an AT-tract. Associates with RAB20 promoter and positively regulates its transcription. Binds DNA and nucleosomes; may recruit HDAC1 complexes to nucleosomes or naked DNA.</text>
</comment>
<comment type="subunit">
    <text evidence="1 4 5 6 8">Monomer and homodimer (PubMed:11473582, PubMed:25653165). A minor proportion may form homotrimers (PubMed:11473582). Interacts with ZNF541 (PubMed:21573134). Interacts with the terminal deoxynucleotidyltransferase DNTT (PubMed:11473582, PubMed:16371131). Interacts with TRERF1 (PubMed:16371131, PubMed:21573134). Identified in a histone deacetylase complex that contains DNTTIP1, HDAC1 and MIDEAS; this complex assembles into a tetramer that contains four copies of each protein chain (PubMed:25653165). Component of a histone deacetylase complex containing DNTTIP1, ZNF541, HDAC1 and HDAC2 (PubMed:21573134). Identified in a complex with KCTD19, HDAC1, HDAC2 and ZNF541 (By similarity).</text>
</comment>
<comment type="interaction">
    <interactant intactId="EBI-2795449">
        <id>Q9H147</id>
    </interactant>
    <interactant intactId="EBI-640741">
        <id>P01023</id>
        <label>A2M</label>
    </interactant>
    <organismsDiffer>false</organismsDiffer>
    <experiments>3</experiments>
</comment>
<comment type="interaction">
    <interactant intactId="EBI-2795449">
        <id>Q9H147</id>
    </interactant>
    <interactant intactId="EBI-762428">
        <id>Q92688</id>
        <label>ANP32B</label>
    </interactant>
    <organismsDiffer>false</organismsDiffer>
    <experiments>3</experiments>
</comment>
<comment type="interaction">
    <interactant intactId="EBI-2795449">
        <id>Q9H147</id>
    </interactant>
    <interactant intactId="EBI-10976677">
        <id>G5E9A7</id>
        <label>DMWD</label>
    </interactant>
    <organismsDiffer>false</organismsDiffer>
    <experiments>3</experiments>
</comment>
<comment type="interaction">
    <interactant intactId="EBI-2795449">
        <id>Q9H147</id>
    </interactant>
    <interactant intactId="EBI-10968534">
        <id>P50570-2</id>
        <label>DNM2</label>
    </interactant>
    <organismsDiffer>false</organismsDiffer>
    <experiments>3</experiments>
</comment>
<comment type="interaction">
    <interactant intactId="EBI-2795449">
        <id>Q9H147</id>
    </interactant>
    <interactant intactId="EBI-769261">
        <id>Q96JC9</id>
        <label>EAF1</label>
    </interactant>
    <organismsDiffer>false</organismsDiffer>
    <experiments>3</experiments>
</comment>
<comment type="interaction">
    <interactant intactId="EBI-2795449">
        <id>Q9H147</id>
    </interactant>
    <interactant intactId="EBI-348399">
        <id>P22607</id>
        <label>FGFR3</label>
    </interactant>
    <organismsDiffer>false</organismsDiffer>
    <experiments>3</experiments>
</comment>
<comment type="interaction">
    <interactant intactId="EBI-2795449">
        <id>Q9H147</id>
    </interactant>
    <interactant intactId="EBI-2549423">
        <id>Q6NT76</id>
        <label>HMBOX1</label>
    </interactant>
    <organismsDiffer>false</organismsDiffer>
    <experiments>3</experiments>
</comment>
<comment type="interaction">
    <interactant intactId="EBI-2795449">
        <id>Q9H147</id>
    </interactant>
    <interactant intactId="EBI-10172004">
        <id>Q8IX15-3</id>
        <label>HOMEZ</label>
    </interactant>
    <organismsDiffer>false</organismsDiffer>
    <experiments>3</experiments>
</comment>
<comment type="interaction">
    <interactant intactId="EBI-2795449">
        <id>Q9H147</id>
    </interactant>
    <interactant intactId="EBI-466029">
        <id>P42858</id>
        <label>HTT</label>
    </interactant>
    <organismsDiffer>false</organismsDiffer>
    <experiments>15</experiments>
</comment>
<comment type="interaction">
    <interactant intactId="EBI-2795449">
        <id>Q9H147</id>
    </interactant>
    <interactant intactId="EBI-1045155">
        <id>P43360</id>
        <label>MAGEA6</label>
    </interactant>
    <organismsDiffer>false</organismsDiffer>
    <experiments>3</experiments>
</comment>
<comment type="interaction">
    <interactant intactId="EBI-2795449">
        <id>Q9H147</id>
    </interactant>
    <interactant intactId="EBI-1048159">
        <id>P55081</id>
        <label>MFAP1</label>
    </interactant>
    <organismsDiffer>false</organismsDiffer>
    <experiments>3</experiments>
</comment>
<comment type="interaction">
    <interactant intactId="EBI-2795449">
        <id>Q9H147</id>
    </interactant>
    <interactant intactId="EBI-79165">
        <id>Q9NRD5</id>
        <label>PICK1</label>
    </interactant>
    <organismsDiffer>false</organismsDiffer>
    <experiments>3</experiments>
</comment>
<comment type="interaction">
    <interactant intactId="EBI-2795449">
        <id>Q9H147</id>
    </interactant>
    <interactant intactId="EBI-5235340">
        <id>Q7Z699</id>
        <label>SPRED1</label>
    </interactant>
    <organismsDiffer>false</organismsDiffer>
    <experiments>3</experiments>
</comment>
<comment type="interaction">
    <interactant intactId="EBI-2795449">
        <id>Q9H147</id>
    </interactant>
    <interactant intactId="EBI-25847109">
        <id>O14656-2</id>
        <label>TOR1A</label>
    </interactant>
    <organismsDiffer>false</organismsDiffer>
    <experiments>3</experiments>
</comment>
<comment type="interaction">
    <interactant intactId="EBI-2795449">
        <id>Q9H147</id>
    </interactant>
    <interactant intactId="EBI-12806590">
        <id>Q86WV8</id>
        <label>TSC1</label>
    </interactant>
    <organismsDiffer>false</organismsDiffer>
    <experiments>3</experiments>
</comment>
<comment type="interaction">
    <interactant intactId="EBI-2795449">
        <id>Q9H147</id>
    </interactant>
    <interactant intactId="EBI-741480">
        <id>Q9UMX0</id>
        <label>UBQLN1</label>
    </interactant>
    <organismsDiffer>false</organismsDiffer>
    <experiments>3</experiments>
</comment>
<comment type="subcellular location">
    <subcellularLocation>
        <location evidence="4 5">Nucleus</location>
    </subcellularLocation>
</comment>
<comment type="domain">
    <text evidence="8">The N-terminal domain mediates dimerization.</text>
</comment>
<comment type="domain">
    <text evidence="4 7 8">The C-terminal domain mediates interaction with DNA and nucleosomes (PubMed:11473582, PubMed:25653165). It contains a HTH motif that mediates recognition of the consensus sequence (PubMed:23874396).</text>
</comment>
<feature type="chain" id="PRO_0000072473" description="Deoxynucleotidyltransferase terminal-interacting protein 1">
    <location>
        <begin position="1"/>
        <end position="329"/>
    </location>
</feature>
<feature type="DNA-binding region" description="A.T hook" evidence="11">
    <location>
        <begin position="159"/>
        <end position="173"/>
    </location>
</feature>
<feature type="DNA-binding region" description="H-T-H motif" evidence="11">
    <location>
        <begin position="216"/>
        <end position="237"/>
    </location>
</feature>
<feature type="region of interest" description="Disordered" evidence="3">
    <location>
        <begin position="1"/>
        <end position="22"/>
    </location>
</feature>
<feature type="region of interest" description="Important for dimerization" evidence="8">
    <location>
        <begin position="56"/>
        <end position="147"/>
    </location>
</feature>
<feature type="region of interest" description="Disordered" evidence="3">
    <location>
        <begin position="147"/>
        <end position="178"/>
    </location>
</feature>
<feature type="region of interest" description="Important for DNA and nucleosome binding" evidence="8">
    <location>
        <begin position="197"/>
        <end position="316"/>
    </location>
</feature>
<feature type="short sequence motif" description="Nuclear localization signal" evidence="2">
    <location>
        <begin position="164"/>
        <end position="170"/>
    </location>
</feature>
<feature type="compositionally biased region" description="Basic and acidic residues" evidence="3">
    <location>
        <begin position="147"/>
        <end position="158"/>
    </location>
</feature>
<feature type="modified residue" description="Phosphoserine" evidence="13 14">
    <location>
        <position position="161"/>
    </location>
</feature>
<feature type="sequence variant" id="VAR_014956" description="In dbSNP:rs408911.">
    <original>A</original>
    <variation>T</variation>
    <location>
        <position position="183"/>
    </location>
</feature>
<feature type="helix" evidence="16">
    <location>
        <begin position="65"/>
        <end position="87"/>
    </location>
</feature>
<feature type="helix" evidence="16">
    <location>
        <begin position="90"/>
        <end position="103"/>
    </location>
</feature>
<feature type="helix" evidence="16">
    <location>
        <begin position="110"/>
        <end position="125"/>
    </location>
</feature>
<feature type="helix" evidence="16">
    <location>
        <begin position="126"/>
        <end position="129"/>
    </location>
</feature>
<feature type="strand" evidence="15">
    <location>
        <begin position="197"/>
        <end position="202"/>
    </location>
</feature>
<feature type="helix" evidence="15">
    <location>
        <begin position="204"/>
        <end position="206"/>
    </location>
</feature>
<feature type="strand" evidence="15">
    <location>
        <begin position="216"/>
        <end position="218"/>
    </location>
</feature>
<feature type="turn" evidence="15">
    <location>
        <begin position="219"/>
        <end position="223"/>
    </location>
</feature>
<feature type="turn" evidence="15">
    <location>
        <begin position="231"/>
        <end position="235"/>
    </location>
</feature>
<feature type="turn" evidence="15">
    <location>
        <begin position="246"/>
        <end position="248"/>
    </location>
</feature>
<feature type="helix" evidence="15">
    <location>
        <begin position="249"/>
        <end position="256"/>
    </location>
</feature>
<feature type="strand" evidence="15">
    <location>
        <begin position="262"/>
        <end position="264"/>
    </location>
</feature>
<feature type="strand" evidence="15">
    <location>
        <begin position="267"/>
        <end position="270"/>
    </location>
</feature>
<feature type="helix" evidence="15">
    <location>
        <begin position="271"/>
        <end position="277"/>
    </location>
</feature>
<feature type="turn" evidence="15">
    <location>
        <begin position="281"/>
        <end position="285"/>
    </location>
</feature>
<feature type="helix" evidence="15">
    <location>
        <begin position="291"/>
        <end position="293"/>
    </location>
</feature>
<feature type="helix" evidence="15">
    <location>
        <begin position="303"/>
        <end position="315"/>
    </location>
</feature>
<reference key="1">
    <citation type="journal article" date="2001" name="Genes Cells">
        <title>Terminal deoxynucleotidyltransferase directly interacts with a novel nuclear protein that is homologous to p65.</title>
        <authorList>
            <person name="Yamashita N."/>
            <person name="Shimazaki N."/>
            <person name="Ibe S."/>
            <person name="Kaneko R."/>
            <person name="Tanabe A."/>
            <person name="Toyomoto T."/>
            <person name="Fujita K."/>
            <person name="Hasegawa T."/>
            <person name="Toji S."/>
            <person name="Tamai K."/>
            <person name="Yamamoto H."/>
            <person name="Koiwai O."/>
        </authorList>
    </citation>
    <scope>NUCLEOTIDE SEQUENCE [MRNA]</scope>
    <scope>FUNCTION</scope>
    <scope>INTERACTION WITH DNTT</scope>
    <scope>SUBUNIT</scope>
    <scope>SUBCELLULAR LOCATION</scope>
    <scope>DNA-BINDING</scope>
    <scope>DOMAIN</scope>
    <source>
        <tissue>Thymus</tissue>
    </source>
</reference>
<reference key="2">
    <citation type="journal article" date="2004" name="Nat. Genet.">
        <title>Complete sequencing and characterization of 21,243 full-length human cDNAs.</title>
        <authorList>
            <person name="Ota T."/>
            <person name="Suzuki Y."/>
            <person name="Nishikawa T."/>
            <person name="Otsuki T."/>
            <person name="Sugiyama T."/>
            <person name="Irie R."/>
            <person name="Wakamatsu A."/>
            <person name="Hayashi K."/>
            <person name="Sato H."/>
            <person name="Nagai K."/>
            <person name="Kimura K."/>
            <person name="Makita H."/>
            <person name="Sekine M."/>
            <person name="Obayashi M."/>
            <person name="Nishi T."/>
            <person name="Shibahara T."/>
            <person name="Tanaka T."/>
            <person name="Ishii S."/>
            <person name="Yamamoto J."/>
            <person name="Saito K."/>
            <person name="Kawai Y."/>
            <person name="Isono Y."/>
            <person name="Nakamura Y."/>
            <person name="Nagahari K."/>
            <person name="Murakami K."/>
            <person name="Yasuda T."/>
            <person name="Iwayanagi T."/>
            <person name="Wagatsuma M."/>
            <person name="Shiratori A."/>
            <person name="Sudo H."/>
            <person name="Hosoiri T."/>
            <person name="Kaku Y."/>
            <person name="Kodaira H."/>
            <person name="Kondo H."/>
            <person name="Sugawara M."/>
            <person name="Takahashi M."/>
            <person name="Kanda K."/>
            <person name="Yokoi T."/>
            <person name="Furuya T."/>
            <person name="Kikkawa E."/>
            <person name="Omura Y."/>
            <person name="Abe K."/>
            <person name="Kamihara K."/>
            <person name="Katsuta N."/>
            <person name="Sato K."/>
            <person name="Tanikawa M."/>
            <person name="Yamazaki M."/>
            <person name="Ninomiya K."/>
            <person name="Ishibashi T."/>
            <person name="Yamashita H."/>
            <person name="Murakawa K."/>
            <person name="Fujimori K."/>
            <person name="Tanai H."/>
            <person name="Kimata M."/>
            <person name="Watanabe M."/>
            <person name="Hiraoka S."/>
            <person name="Chiba Y."/>
            <person name="Ishida S."/>
            <person name="Ono Y."/>
            <person name="Takiguchi S."/>
            <person name="Watanabe S."/>
            <person name="Yosida M."/>
            <person name="Hotuta T."/>
            <person name="Kusano J."/>
            <person name="Kanehori K."/>
            <person name="Takahashi-Fujii A."/>
            <person name="Hara H."/>
            <person name="Tanase T.-O."/>
            <person name="Nomura Y."/>
            <person name="Togiya S."/>
            <person name="Komai F."/>
            <person name="Hara R."/>
            <person name="Takeuchi K."/>
            <person name="Arita M."/>
            <person name="Imose N."/>
            <person name="Musashino K."/>
            <person name="Yuuki H."/>
            <person name="Oshima A."/>
            <person name="Sasaki N."/>
            <person name="Aotsuka S."/>
            <person name="Yoshikawa Y."/>
            <person name="Matsunawa H."/>
            <person name="Ichihara T."/>
            <person name="Shiohata N."/>
            <person name="Sano S."/>
            <person name="Moriya S."/>
            <person name="Momiyama H."/>
            <person name="Satoh N."/>
            <person name="Takami S."/>
            <person name="Terashima Y."/>
            <person name="Suzuki O."/>
            <person name="Nakagawa S."/>
            <person name="Senoh A."/>
            <person name="Mizoguchi H."/>
            <person name="Goto Y."/>
            <person name="Shimizu F."/>
            <person name="Wakebe H."/>
            <person name="Hishigaki H."/>
            <person name="Watanabe T."/>
            <person name="Sugiyama A."/>
            <person name="Takemoto M."/>
            <person name="Kawakami B."/>
            <person name="Yamazaki M."/>
            <person name="Watanabe K."/>
            <person name="Kumagai A."/>
            <person name="Itakura S."/>
            <person name="Fukuzumi Y."/>
            <person name="Fujimori Y."/>
            <person name="Komiyama M."/>
            <person name="Tashiro H."/>
            <person name="Tanigami A."/>
            <person name="Fujiwara T."/>
            <person name="Ono T."/>
            <person name="Yamada K."/>
            <person name="Fujii Y."/>
            <person name="Ozaki K."/>
            <person name="Hirao M."/>
            <person name="Ohmori Y."/>
            <person name="Kawabata A."/>
            <person name="Hikiji T."/>
            <person name="Kobatake N."/>
            <person name="Inagaki H."/>
            <person name="Ikema Y."/>
            <person name="Okamoto S."/>
            <person name="Okitani R."/>
            <person name="Kawakami T."/>
            <person name="Noguchi S."/>
            <person name="Itoh T."/>
            <person name="Shigeta K."/>
            <person name="Senba T."/>
            <person name="Matsumura K."/>
            <person name="Nakajima Y."/>
            <person name="Mizuno T."/>
            <person name="Morinaga M."/>
            <person name="Sasaki M."/>
            <person name="Togashi T."/>
            <person name="Oyama M."/>
            <person name="Hata H."/>
            <person name="Watanabe M."/>
            <person name="Komatsu T."/>
            <person name="Mizushima-Sugano J."/>
            <person name="Satoh T."/>
            <person name="Shirai Y."/>
            <person name="Takahashi Y."/>
            <person name="Nakagawa K."/>
            <person name="Okumura K."/>
            <person name="Nagase T."/>
            <person name="Nomura N."/>
            <person name="Kikuchi H."/>
            <person name="Masuho Y."/>
            <person name="Yamashita R."/>
            <person name="Nakai K."/>
            <person name="Yada T."/>
            <person name="Nakamura Y."/>
            <person name="Ohara O."/>
            <person name="Isogai T."/>
            <person name="Sugano S."/>
        </authorList>
    </citation>
    <scope>NUCLEOTIDE SEQUENCE [LARGE SCALE MRNA]</scope>
    <source>
        <tissue>Skeletal muscle</tissue>
    </source>
</reference>
<reference key="3">
    <citation type="journal article" date="2001" name="Nature">
        <title>The DNA sequence and comparative analysis of human chromosome 20.</title>
        <authorList>
            <person name="Deloukas P."/>
            <person name="Matthews L.H."/>
            <person name="Ashurst J.L."/>
            <person name="Burton J."/>
            <person name="Gilbert J.G.R."/>
            <person name="Jones M."/>
            <person name="Stavrides G."/>
            <person name="Almeida J.P."/>
            <person name="Babbage A.K."/>
            <person name="Bagguley C.L."/>
            <person name="Bailey J."/>
            <person name="Barlow K.F."/>
            <person name="Bates K.N."/>
            <person name="Beard L.M."/>
            <person name="Beare D.M."/>
            <person name="Beasley O.P."/>
            <person name="Bird C.P."/>
            <person name="Blakey S.E."/>
            <person name="Bridgeman A.M."/>
            <person name="Brown A.J."/>
            <person name="Buck D."/>
            <person name="Burrill W.D."/>
            <person name="Butler A.P."/>
            <person name="Carder C."/>
            <person name="Carter N.P."/>
            <person name="Chapman J.C."/>
            <person name="Clamp M."/>
            <person name="Clark G."/>
            <person name="Clark L.N."/>
            <person name="Clark S.Y."/>
            <person name="Clee C.M."/>
            <person name="Clegg S."/>
            <person name="Cobley V.E."/>
            <person name="Collier R.E."/>
            <person name="Connor R.E."/>
            <person name="Corby N.R."/>
            <person name="Coulson A."/>
            <person name="Coville G.J."/>
            <person name="Deadman R."/>
            <person name="Dhami P.D."/>
            <person name="Dunn M."/>
            <person name="Ellington A.G."/>
            <person name="Frankland J.A."/>
            <person name="Fraser A."/>
            <person name="French L."/>
            <person name="Garner P."/>
            <person name="Grafham D.V."/>
            <person name="Griffiths C."/>
            <person name="Griffiths M.N.D."/>
            <person name="Gwilliam R."/>
            <person name="Hall R.E."/>
            <person name="Hammond S."/>
            <person name="Harley J.L."/>
            <person name="Heath P.D."/>
            <person name="Ho S."/>
            <person name="Holden J.L."/>
            <person name="Howden P.J."/>
            <person name="Huckle E."/>
            <person name="Hunt A.R."/>
            <person name="Hunt S.E."/>
            <person name="Jekosch K."/>
            <person name="Johnson C.M."/>
            <person name="Johnson D."/>
            <person name="Kay M.P."/>
            <person name="Kimberley A.M."/>
            <person name="King A."/>
            <person name="Knights A."/>
            <person name="Laird G.K."/>
            <person name="Lawlor S."/>
            <person name="Lehvaeslaiho M.H."/>
            <person name="Leversha M.A."/>
            <person name="Lloyd C."/>
            <person name="Lloyd D.M."/>
            <person name="Lovell J.D."/>
            <person name="Marsh V.L."/>
            <person name="Martin S.L."/>
            <person name="McConnachie L.J."/>
            <person name="McLay K."/>
            <person name="McMurray A.A."/>
            <person name="Milne S.A."/>
            <person name="Mistry D."/>
            <person name="Moore M.J.F."/>
            <person name="Mullikin J.C."/>
            <person name="Nickerson T."/>
            <person name="Oliver K."/>
            <person name="Parker A."/>
            <person name="Patel R."/>
            <person name="Pearce T.A.V."/>
            <person name="Peck A.I."/>
            <person name="Phillimore B.J.C.T."/>
            <person name="Prathalingam S.R."/>
            <person name="Plumb R.W."/>
            <person name="Ramsay H."/>
            <person name="Rice C.M."/>
            <person name="Ross M.T."/>
            <person name="Scott C.E."/>
            <person name="Sehra H.K."/>
            <person name="Shownkeen R."/>
            <person name="Sims S."/>
            <person name="Skuce C.D."/>
            <person name="Smith M.L."/>
            <person name="Soderlund C."/>
            <person name="Steward C.A."/>
            <person name="Sulston J.E."/>
            <person name="Swann R.M."/>
            <person name="Sycamore N."/>
            <person name="Taylor R."/>
            <person name="Tee L."/>
            <person name="Thomas D.W."/>
            <person name="Thorpe A."/>
            <person name="Tracey A."/>
            <person name="Tromans A.C."/>
            <person name="Vaudin M."/>
            <person name="Wall M."/>
            <person name="Wallis J.M."/>
            <person name="Whitehead S.L."/>
            <person name="Whittaker P."/>
            <person name="Willey D.L."/>
            <person name="Williams L."/>
            <person name="Williams S.A."/>
            <person name="Wilming L."/>
            <person name="Wray P.W."/>
            <person name="Hubbard T."/>
            <person name="Durbin R.M."/>
            <person name="Bentley D.R."/>
            <person name="Beck S."/>
            <person name="Rogers J."/>
        </authorList>
    </citation>
    <scope>NUCLEOTIDE SEQUENCE [LARGE SCALE GENOMIC DNA]</scope>
</reference>
<reference key="4">
    <citation type="submission" date="2005-09" db="EMBL/GenBank/DDBJ databases">
        <authorList>
            <person name="Mural R.J."/>
            <person name="Istrail S."/>
            <person name="Sutton G.G."/>
            <person name="Florea L."/>
            <person name="Halpern A.L."/>
            <person name="Mobarry C.M."/>
            <person name="Lippert R."/>
            <person name="Walenz B."/>
            <person name="Shatkay H."/>
            <person name="Dew I."/>
            <person name="Miller J.R."/>
            <person name="Flanigan M.J."/>
            <person name="Edwards N.J."/>
            <person name="Bolanos R."/>
            <person name="Fasulo D."/>
            <person name="Halldorsson B.V."/>
            <person name="Hannenhalli S."/>
            <person name="Turner R."/>
            <person name="Yooseph S."/>
            <person name="Lu F."/>
            <person name="Nusskern D.R."/>
            <person name="Shue B.C."/>
            <person name="Zheng X.H."/>
            <person name="Zhong F."/>
            <person name="Delcher A.L."/>
            <person name="Huson D.H."/>
            <person name="Kravitz S.A."/>
            <person name="Mouchard L."/>
            <person name="Reinert K."/>
            <person name="Remington K.A."/>
            <person name="Clark A.G."/>
            <person name="Waterman M.S."/>
            <person name="Eichler E.E."/>
            <person name="Adams M.D."/>
            <person name="Hunkapiller M.W."/>
            <person name="Myers E.W."/>
            <person name="Venter J.C."/>
        </authorList>
    </citation>
    <scope>NUCLEOTIDE SEQUENCE [LARGE SCALE GENOMIC DNA]</scope>
</reference>
<reference key="5">
    <citation type="journal article" date="2004" name="Genome Res.">
        <title>The status, quality, and expansion of the NIH full-length cDNA project: the Mammalian Gene Collection (MGC).</title>
        <authorList>
            <consortium name="The MGC Project Team"/>
        </authorList>
    </citation>
    <scope>NUCLEOTIDE SEQUENCE [LARGE SCALE MRNA]</scope>
    <source>
        <tissue>Lung</tissue>
        <tissue>Muscle</tissue>
    </source>
</reference>
<reference key="6">
    <citation type="journal article" date="2006" name="Cell">
        <title>Global, in vivo, and site-specific phosphorylation dynamics in signaling networks.</title>
        <authorList>
            <person name="Olsen J.V."/>
            <person name="Blagoev B."/>
            <person name="Gnad F."/>
            <person name="Macek B."/>
            <person name="Kumar C."/>
            <person name="Mortensen P."/>
            <person name="Mann M."/>
        </authorList>
    </citation>
    <scope>PHOSPHORYLATION [LARGE SCALE ANALYSIS] AT SER-161</scope>
    <scope>IDENTIFICATION BY MASS SPECTROMETRY [LARGE SCALE ANALYSIS]</scope>
    <source>
        <tissue>Cervix carcinoma</tissue>
    </source>
</reference>
<reference key="7">
    <citation type="journal article" date="2006" name="Genes Cells">
        <title>Direct binding of TReP-132 with TdT results in reduction of TdT activity.</title>
        <authorList>
            <person name="Fujisaki S."/>
            <person name="Sato A."/>
            <person name="Toyomoto T."/>
            <person name="Hayano T."/>
            <person name="Sugai M."/>
            <person name="Kubota T."/>
            <person name="Koiwai O."/>
        </authorList>
    </citation>
    <scope>INTERACTION WITH TRERF1 AND DNTT</scope>
    <scope>SUBCELLULAR LOCATION</scope>
</reference>
<reference key="8">
    <citation type="journal article" date="2008" name="Proc. Natl. Acad. Sci. U.S.A.">
        <title>A quantitative atlas of mitotic phosphorylation.</title>
        <authorList>
            <person name="Dephoure N."/>
            <person name="Zhou C."/>
            <person name="Villen J."/>
            <person name="Beausoleil S.A."/>
            <person name="Bakalarski C.E."/>
            <person name="Elledge S.J."/>
            <person name="Gygi S.P."/>
        </authorList>
    </citation>
    <scope>IDENTIFICATION BY MASS SPECTROMETRY [LARGE SCALE ANALYSIS]</scope>
    <source>
        <tissue>Cervix carcinoma</tissue>
    </source>
</reference>
<reference key="9">
    <citation type="journal article" date="2009" name="Sci. Signal.">
        <title>Quantitative phosphoproteomic analysis of T cell receptor signaling reveals system-wide modulation of protein-protein interactions.</title>
        <authorList>
            <person name="Mayya V."/>
            <person name="Lundgren D.H."/>
            <person name="Hwang S.-I."/>
            <person name="Rezaul K."/>
            <person name="Wu L."/>
            <person name="Eng J.K."/>
            <person name="Rodionov V."/>
            <person name="Han D.K."/>
        </authorList>
    </citation>
    <scope>IDENTIFICATION BY MASS SPECTROMETRY [LARGE SCALE ANALYSIS]</scope>
    <source>
        <tissue>Leukemic T-cell</tissue>
    </source>
</reference>
<reference key="10">
    <citation type="journal article" date="2011" name="PLoS Genet.">
        <title>Nuclear cGMP-dependent kinase regulates gene expression via activity-dependent recruitment of a conserved histone deacetylase complex.</title>
        <authorList>
            <person name="Hao Y."/>
            <person name="Xu N."/>
            <person name="Box A.C."/>
            <person name="Schaefer L."/>
            <person name="Kannan K."/>
            <person name="Zhang Y."/>
            <person name="Florens L."/>
            <person name="Seidel C."/>
            <person name="Washburn M.P."/>
            <person name="Wiegraebe W."/>
            <person name="Mak H.Y."/>
        </authorList>
    </citation>
    <scope>IDENTIFICATION IN HISTONE DEACETYLASE COMPLEX</scope>
    <scope>INTERACTION WITH ZNF541; TRERF1; HDAC1; HDAC2 AND MIDEAS</scope>
</reference>
<reference key="11">
    <citation type="journal article" date="2013" name="J. Proteome Res.">
        <title>Toward a comprehensive characterization of a human cancer cell phosphoproteome.</title>
        <authorList>
            <person name="Zhou H."/>
            <person name="Di Palma S."/>
            <person name="Preisinger C."/>
            <person name="Peng M."/>
            <person name="Polat A.N."/>
            <person name="Heck A.J."/>
            <person name="Mohammed S."/>
        </authorList>
    </citation>
    <scope>PHOSPHORYLATION [LARGE SCALE ANALYSIS] AT SER-161</scope>
    <scope>IDENTIFICATION BY MASS SPECTROMETRY [LARGE SCALE ANALYSIS]</scope>
    <source>
        <tissue>Cervix carcinoma</tissue>
    </source>
</reference>
<reference key="12">
    <citation type="journal article" date="2013" name="PLoS ONE">
        <title>TdIF1 recognizes a specific DNA sequence through its Helix-Turn-Helix and AT-hook motifs to regulate gene transcription.</title>
        <authorList>
            <person name="Kubota T."/>
            <person name="Koiwai O."/>
            <person name="Hori K."/>
            <person name="Watanabe N."/>
            <person name="Koiwai K."/>
        </authorList>
    </citation>
    <scope>FUNCTION</scope>
    <scope>DNA-BINDING</scope>
</reference>
<reference key="13">
    <citation type="journal article" date="2014" name="J. Proteomics">
        <title>An enzyme assisted RP-RPLC approach for in-depth analysis of human liver phosphoproteome.</title>
        <authorList>
            <person name="Bian Y."/>
            <person name="Song C."/>
            <person name="Cheng K."/>
            <person name="Dong M."/>
            <person name="Wang F."/>
            <person name="Huang J."/>
            <person name="Sun D."/>
            <person name="Wang L."/>
            <person name="Ye M."/>
            <person name="Zou H."/>
        </authorList>
    </citation>
    <scope>IDENTIFICATION BY MASS SPECTROMETRY [LARGE SCALE ANALYSIS]</scope>
    <source>
        <tissue>Liver</tissue>
    </source>
</reference>
<reference key="14">
    <citation type="journal article" date="2015" name="Nucleic Acids Res.">
        <title>Structural and functional characterization of a cell cycle associated HDAC1/2 complex reveals the structural basis for complex assembly and nucleosome targeting.</title>
        <authorList>
            <person name="Itoh T."/>
            <person name="Fairall L."/>
            <person name="Muskett F.W."/>
            <person name="Milano C.P."/>
            <person name="Watson P.J."/>
            <person name="Arnaudo N."/>
            <person name="Saleh A."/>
            <person name="Millard C.J."/>
            <person name="El-Mezgueldi M."/>
            <person name="Martino F."/>
            <person name="Schwabe J.W."/>
        </authorList>
    </citation>
    <scope>X-RAY CRYSTALLOGRAPHY (2.1 ANGSTROMS) OF 47-156</scope>
    <scope>STRUCTURE BY NMR OF 197-316</scope>
    <scope>SUBUNIT</scope>
    <scope>INTERACTION WITH MIDEAS AND HDAC1</scope>
    <scope>IDENTIFICATION BY MASS SPECTROMETRY</scope>
    <scope>DOMAIN</scope>
    <scope>DNA-BINDING</scope>
    <scope>FUNCTION</scope>
</reference>
<dbReference type="EMBL" id="AB035676">
    <property type="protein sequence ID" value="BAB62888.1"/>
    <property type="molecule type" value="mRNA"/>
</dbReference>
<dbReference type="EMBL" id="AK314003">
    <property type="protein sequence ID" value="BAG36715.1"/>
    <property type="molecule type" value="mRNA"/>
</dbReference>
<dbReference type="EMBL" id="AL050348">
    <property type="status" value="NOT_ANNOTATED_CDS"/>
    <property type="molecule type" value="Genomic_DNA"/>
</dbReference>
<dbReference type="EMBL" id="CH471077">
    <property type="protein sequence ID" value="EAW75812.1"/>
    <property type="molecule type" value="Genomic_DNA"/>
</dbReference>
<dbReference type="EMBL" id="BC024290">
    <property type="protein sequence ID" value="AAH24290.1"/>
    <property type="molecule type" value="mRNA"/>
</dbReference>
<dbReference type="EMBL" id="BC009535">
    <property type="protein sequence ID" value="AAH09535.1"/>
    <property type="molecule type" value="mRNA"/>
</dbReference>
<dbReference type="CCDS" id="CCDS13369.1"/>
<dbReference type="RefSeq" id="NP_443183.1">
    <property type="nucleotide sequence ID" value="NM_052951.3"/>
</dbReference>
<dbReference type="PDB" id="2MWI">
    <property type="method" value="NMR"/>
    <property type="chains" value="A=197-316"/>
</dbReference>
<dbReference type="PDB" id="4D6K">
    <property type="method" value="X-ray"/>
    <property type="resolution" value="2.10 A"/>
    <property type="chains" value="A/B/C/D/E/F=56-147"/>
</dbReference>
<dbReference type="PDB" id="6Z2J">
    <property type="method" value="EM"/>
    <property type="resolution" value="4.00 A"/>
    <property type="chains" value="A/B=1-130"/>
</dbReference>
<dbReference type="PDB" id="6Z2K">
    <property type="method" value="EM"/>
    <property type="resolution" value="4.50 A"/>
    <property type="chains" value="A/B/G/H=1-130"/>
</dbReference>
<dbReference type="PDBsum" id="2MWI"/>
<dbReference type="PDBsum" id="4D6K"/>
<dbReference type="PDBsum" id="6Z2J"/>
<dbReference type="PDBsum" id="6Z2K"/>
<dbReference type="BMRB" id="Q9H147"/>
<dbReference type="EMDB" id="EMD-11041"/>
<dbReference type="EMDB" id="EMD-11042"/>
<dbReference type="SMR" id="Q9H147"/>
<dbReference type="BioGRID" id="125472">
    <property type="interactions" value="100"/>
</dbReference>
<dbReference type="ComplexPortal" id="CPX-2867">
    <property type="entry name" value="MiDAC histone deacetylase complex, HDAC2 variant"/>
</dbReference>
<dbReference type="ComplexPortal" id="CPX-2874">
    <property type="entry name" value="MiDAC histone deacetylase complex, HDAC1 variant"/>
</dbReference>
<dbReference type="CORUM" id="Q9H147"/>
<dbReference type="FunCoup" id="Q9H147">
    <property type="interactions" value="3009"/>
</dbReference>
<dbReference type="IntAct" id="Q9H147">
    <property type="interactions" value="77"/>
</dbReference>
<dbReference type="MINT" id="Q9H147"/>
<dbReference type="STRING" id="9606.ENSP00000361705"/>
<dbReference type="GlyGen" id="Q9H147">
    <property type="glycosylation" value="1 site, 1 O-linked glycan (1 site)"/>
</dbReference>
<dbReference type="iPTMnet" id="Q9H147"/>
<dbReference type="PhosphoSitePlus" id="Q9H147"/>
<dbReference type="BioMuta" id="DNTTIP1"/>
<dbReference type="DMDM" id="26400504"/>
<dbReference type="jPOST" id="Q9H147"/>
<dbReference type="MassIVE" id="Q9H147"/>
<dbReference type="PaxDb" id="9606-ENSP00000361705"/>
<dbReference type="PeptideAtlas" id="Q9H147"/>
<dbReference type="ProteomicsDB" id="80354"/>
<dbReference type="Pumba" id="Q9H147"/>
<dbReference type="Antibodypedia" id="12850">
    <property type="antibodies" value="262 antibodies from 23 providers"/>
</dbReference>
<dbReference type="DNASU" id="116092"/>
<dbReference type="Ensembl" id="ENST00000372622.8">
    <property type="protein sequence ID" value="ENSP00000361705.3"/>
    <property type="gene ID" value="ENSG00000101457.13"/>
</dbReference>
<dbReference type="GeneID" id="116092"/>
<dbReference type="KEGG" id="hsa:116092"/>
<dbReference type="MANE-Select" id="ENST00000372622.8">
    <property type="protein sequence ID" value="ENSP00000361705.3"/>
    <property type="RefSeq nucleotide sequence ID" value="NM_052951.3"/>
    <property type="RefSeq protein sequence ID" value="NP_443183.1"/>
</dbReference>
<dbReference type="UCSC" id="uc002xpk.3">
    <property type="organism name" value="human"/>
</dbReference>
<dbReference type="AGR" id="HGNC:16160"/>
<dbReference type="CTD" id="116092"/>
<dbReference type="DisGeNET" id="116092"/>
<dbReference type="GeneCards" id="DNTTIP1"/>
<dbReference type="HGNC" id="HGNC:16160">
    <property type="gene designation" value="DNTTIP1"/>
</dbReference>
<dbReference type="HPA" id="ENSG00000101457">
    <property type="expression patterns" value="Low tissue specificity"/>
</dbReference>
<dbReference type="MIM" id="611388">
    <property type="type" value="gene"/>
</dbReference>
<dbReference type="neXtProt" id="NX_Q9H147"/>
<dbReference type="OpenTargets" id="ENSG00000101457"/>
<dbReference type="PharmGKB" id="PA25709"/>
<dbReference type="VEuPathDB" id="HostDB:ENSG00000101457"/>
<dbReference type="eggNOG" id="KOG4801">
    <property type="taxonomic scope" value="Eukaryota"/>
</dbReference>
<dbReference type="GeneTree" id="ENSGT00510000047836"/>
<dbReference type="InParanoid" id="Q9H147"/>
<dbReference type="OMA" id="LAENHHM"/>
<dbReference type="OrthoDB" id="5860246at2759"/>
<dbReference type="PAN-GO" id="Q9H147">
    <property type="GO annotations" value="3 GO annotations based on evolutionary models"/>
</dbReference>
<dbReference type="PhylomeDB" id="Q9H147"/>
<dbReference type="TreeFam" id="TF329275"/>
<dbReference type="PathwayCommons" id="Q9H147"/>
<dbReference type="SignaLink" id="Q9H147"/>
<dbReference type="BioGRID-ORCS" id="116092">
    <property type="hits" value="58 hits in 1173 CRISPR screens"/>
</dbReference>
<dbReference type="ChiTaRS" id="DNTTIP1">
    <property type="organism name" value="human"/>
</dbReference>
<dbReference type="EvolutionaryTrace" id="Q9H147"/>
<dbReference type="GenomeRNAi" id="116092"/>
<dbReference type="Pharos" id="Q9H147">
    <property type="development level" value="Tbio"/>
</dbReference>
<dbReference type="PRO" id="PR:Q9H147"/>
<dbReference type="Proteomes" id="UP000005640">
    <property type="component" value="Chromosome 20"/>
</dbReference>
<dbReference type="RNAct" id="Q9H147">
    <property type="molecule type" value="protein"/>
</dbReference>
<dbReference type="Bgee" id="ENSG00000101457">
    <property type="expression patterns" value="Expressed in monocyte and 183 other cell types or tissues"/>
</dbReference>
<dbReference type="ExpressionAtlas" id="Q9H147">
    <property type="expression patterns" value="baseline and differential"/>
</dbReference>
<dbReference type="GO" id="GO:0005694">
    <property type="term" value="C:chromosome"/>
    <property type="evidence" value="ECO:0000314"/>
    <property type="project" value="HPA"/>
</dbReference>
<dbReference type="GO" id="GO:0000118">
    <property type="term" value="C:histone deacetylase complex"/>
    <property type="evidence" value="ECO:0000314"/>
    <property type="project" value="UniProtKB"/>
</dbReference>
<dbReference type="GO" id="GO:0005730">
    <property type="term" value="C:nucleolus"/>
    <property type="evidence" value="ECO:0000314"/>
    <property type="project" value="HPA"/>
</dbReference>
<dbReference type="GO" id="GO:0005654">
    <property type="term" value="C:nucleoplasm"/>
    <property type="evidence" value="ECO:0000314"/>
    <property type="project" value="HPA"/>
</dbReference>
<dbReference type="GO" id="GO:0005634">
    <property type="term" value="C:nucleus"/>
    <property type="evidence" value="ECO:0000314"/>
    <property type="project" value="UniProtKB"/>
</dbReference>
<dbReference type="GO" id="GO:0003677">
    <property type="term" value="F:DNA binding"/>
    <property type="evidence" value="ECO:0000314"/>
    <property type="project" value="UniProtKB"/>
</dbReference>
<dbReference type="GO" id="GO:0031491">
    <property type="term" value="F:nucleosome binding"/>
    <property type="evidence" value="ECO:0000314"/>
    <property type="project" value="UniProtKB"/>
</dbReference>
<dbReference type="GO" id="GO:0042803">
    <property type="term" value="F:protein homodimerization activity"/>
    <property type="evidence" value="ECO:0000314"/>
    <property type="project" value="UniProtKB"/>
</dbReference>
<dbReference type="InterPro" id="IPR041384">
    <property type="entry name" value="DNTTIP1_dimer"/>
</dbReference>
<dbReference type="InterPro" id="IPR026064">
    <property type="entry name" value="TdIF1"/>
</dbReference>
<dbReference type="InterPro" id="IPR049121">
    <property type="entry name" value="TdIF1_C"/>
</dbReference>
<dbReference type="PANTHER" id="PTHR23399">
    <property type="entry name" value="DEOXYNUCLEOTIDYLTRANSFERASE TERMINAL-INTERACTING PROTEIN 1"/>
    <property type="match status" value="1"/>
</dbReference>
<dbReference type="PANTHER" id="PTHR23399:SF2">
    <property type="entry name" value="DEOXYNUCLEOTIDYLTRANSFERASE TERMINAL-INTERACTING PROTEIN 1"/>
    <property type="match status" value="1"/>
</dbReference>
<dbReference type="Pfam" id="PF18192">
    <property type="entry name" value="DNTTIP1_dimer"/>
    <property type="match status" value="1"/>
</dbReference>
<dbReference type="Pfam" id="PF21229">
    <property type="entry name" value="TdIF1_2nd"/>
    <property type="match status" value="1"/>
</dbReference>
<protein>
    <recommendedName>
        <fullName>Deoxynucleotidyltransferase terminal-interacting protein 1</fullName>
    </recommendedName>
    <alternativeName>
        <fullName>Terminal deoxynucleotidyltransferase-interacting factor 1</fullName>
        <shortName evidence="9 10">TdIF1</shortName>
        <shortName evidence="9">TdT-interacting factor 1</shortName>
    </alternativeName>
</protein>
<evidence type="ECO:0000250" key="1">
    <source>
        <dbReference type="UniProtKB" id="Q99LB0"/>
    </source>
</evidence>
<evidence type="ECO:0000255" key="2"/>
<evidence type="ECO:0000256" key="3">
    <source>
        <dbReference type="SAM" id="MobiDB-lite"/>
    </source>
</evidence>
<evidence type="ECO:0000269" key="4">
    <source>
    </source>
</evidence>
<evidence type="ECO:0000269" key="5">
    <source>
    </source>
</evidence>
<evidence type="ECO:0000269" key="6">
    <source>
    </source>
</evidence>
<evidence type="ECO:0000269" key="7">
    <source>
    </source>
</evidence>
<evidence type="ECO:0000269" key="8">
    <source>
    </source>
</evidence>
<evidence type="ECO:0000303" key="9">
    <source>
    </source>
</evidence>
<evidence type="ECO:0000303" key="10">
    <source>
    </source>
</evidence>
<evidence type="ECO:0000305" key="11">
    <source>
    </source>
</evidence>
<evidence type="ECO:0000305" key="12">
    <source>
    </source>
</evidence>
<evidence type="ECO:0007744" key="13">
    <source>
    </source>
</evidence>
<evidence type="ECO:0007744" key="14">
    <source>
    </source>
</evidence>
<evidence type="ECO:0007829" key="15">
    <source>
        <dbReference type="PDB" id="2MWI"/>
    </source>
</evidence>
<evidence type="ECO:0007829" key="16">
    <source>
        <dbReference type="PDB" id="4D6K"/>
    </source>
</evidence>
<name>TDIF1_HUMAN</name>
<accession>Q9H147</accession>
<accession>B2RA18</accession>
<accession>Q96DE3</accession>
<accession>Q9BQP2</accession>
<accession>Q9H148</accession>
<organism>
    <name type="scientific">Homo sapiens</name>
    <name type="common">Human</name>
    <dbReference type="NCBI Taxonomy" id="9606"/>
    <lineage>
        <taxon>Eukaryota</taxon>
        <taxon>Metazoa</taxon>
        <taxon>Chordata</taxon>
        <taxon>Craniata</taxon>
        <taxon>Vertebrata</taxon>
        <taxon>Euteleostomi</taxon>
        <taxon>Mammalia</taxon>
        <taxon>Eutheria</taxon>
        <taxon>Euarchontoglires</taxon>
        <taxon>Primates</taxon>
        <taxon>Haplorrhini</taxon>
        <taxon>Catarrhini</taxon>
        <taxon>Hominidae</taxon>
        <taxon>Homo</taxon>
    </lineage>
</organism>
<sequence>MGATGDAEQPRGPSGAERGGLELGDAGAAGQLVLTNPWNIMIKHRQVQRRGRRSQMTTSFTDPAISMDLLRAVLQPSINEEIQTVFNKYMKFFQKAALNVRDNVGEEVDAEQLIQEACRSCLEQAKLLFSDGEKVIPRLTHELPGIKRGRQAEEECAHRGSPLPKKRKGRPPGHILSSDRAAAGMVWKPKSCEPIRREGPKWDPARLNESTTFVLGSRANKALGMGGTRGRIYIKHPHLFKYAADPQDKHWLAEQHHMRATGGKMAYLLIEEDIRDLAASDDYRGCLDLKLEELKSFVLPSWMVEKMRKYMETLRTENEHRAVEAPPQT</sequence>
<gene>
    <name type="primary">DNTTIP1</name>
    <name type="synonym">C20orf167</name>
    <name type="synonym">TDIF1</name>
</gene>